<evidence type="ECO:0000255" key="1">
    <source>
        <dbReference type="HAMAP-Rule" id="MF_00193"/>
    </source>
</evidence>
<accession>Q2NRT4</accession>
<keyword id="KW-0067">ATP-binding</keyword>
<keyword id="KW-0436">Ligase</keyword>
<keyword id="KW-0460">Magnesium</keyword>
<keyword id="KW-0479">Metal-binding</keyword>
<keyword id="KW-0520">NAD</keyword>
<keyword id="KW-0547">Nucleotide-binding</keyword>
<reference key="1">
    <citation type="journal article" date="2006" name="Genome Res.">
        <title>Massive genome erosion and functional adaptations provide insights into the symbiotic lifestyle of Sodalis glossinidius in the tsetse host.</title>
        <authorList>
            <person name="Toh H."/>
            <person name="Weiss B.L."/>
            <person name="Perkin S.A.H."/>
            <person name="Yamashita A."/>
            <person name="Oshima K."/>
            <person name="Hattori M."/>
            <person name="Aksoy S."/>
        </authorList>
    </citation>
    <scope>NUCLEOTIDE SEQUENCE [LARGE SCALE GENOMIC DNA]</scope>
    <source>
        <strain>morsitans</strain>
    </source>
</reference>
<protein>
    <recommendedName>
        <fullName evidence="1">NH(3)-dependent NAD(+) synthetase</fullName>
        <ecNumber evidence="1">6.3.1.5</ecNumber>
    </recommendedName>
</protein>
<name>NADE_SODGM</name>
<organism>
    <name type="scientific">Sodalis glossinidius (strain morsitans)</name>
    <dbReference type="NCBI Taxonomy" id="343509"/>
    <lineage>
        <taxon>Bacteria</taxon>
        <taxon>Pseudomonadati</taxon>
        <taxon>Pseudomonadota</taxon>
        <taxon>Gammaproteobacteria</taxon>
        <taxon>Enterobacterales</taxon>
        <taxon>Bruguierivoracaceae</taxon>
        <taxon>Sodalis</taxon>
    </lineage>
</organism>
<proteinExistence type="inferred from homology"/>
<feature type="chain" id="PRO_1000077611" description="NH(3)-dependent NAD(+) synthetase">
    <location>
        <begin position="1"/>
        <end position="274"/>
    </location>
</feature>
<feature type="binding site" evidence="1">
    <location>
        <begin position="46"/>
        <end position="53"/>
    </location>
    <ligand>
        <name>ATP</name>
        <dbReference type="ChEBI" id="CHEBI:30616"/>
    </ligand>
</feature>
<feature type="binding site" evidence="1">
    <location>
        <position position="52"/>
    </location>
    <ligand>
        <name>Mg(2+)</name>
        <dbReference type="ChEBI" id="CHEBI:18420"/>
    </ligand>
</feature>
<feature type="binding site" evidence="1">
    <location>
        <position position="140"/>
    </location>
    <ligand>
        <name>deamido-NAD(+)</name>
        <dbReference type="ChEBI" id="CHEBI:58437"/>
    </ligand>
</feature>
<feature type="binding site" evidence="1">
    <location>
        <position position="160"/>
    </location>
    <ligand>
        <name>ATP</name>
        <dbReference type="ChEBI" id="CHEBI:30616"/>
    </ligand>
</feature>
<feature type="binding site" evidence="1">
    <location>
        <position position="165"/>
    </location>
    <ligand>
        <name>Mg(2+)</name>
        <dbReference type="ChEBI" id="CHEBI:18420"/>
    </ligand>
</feature>
<feature type="binding site" evidence="1">
    <location>
        <position position="173"/>
    </location>
    <ligand>
        <name>deamido-NAD(+)</name>
        <dbReference type="ChEBI" id="CHEBI:58437"/>
    </ligand>
</feature>
<feature type="binding site" evidence="1">
    <location>
        <position position="180"/>
    </location>
    <ligand>
        <name>deamido-NAD(+)</name>
        <dbReference type="ChEBI" id="CHEBI:58437"/>
    </ligand>
</feature>
<feature type="binding site" evidence="1">
    <location>
        <position position="189"/>
    </location>
    <ligand>
        <name>ATP</name>
        <dbReference type="ChEBI" id="CHEBI:30616"/>
    </ligand>
</feature>
<feature type="binding site" evidence="1">
    <location>
        <position position="211"/>
    </location>
    <ligand>
        <name>ATP</name>
        <dbReference type="ChEBI" id="CHEBI:30616"/>
    </ligand>
</feature>
<feature type="binding site" evidence="1">
    <location>
        <begin position="260"/>
        <end position="261"/>
    </location>
    <ligand>
        <name>deamido-NAD(+)</name>
        <dbReference type="ChEBI" id="CHEBI:58437"/>
    </ligand>
</feature>
<gene>
    <name evidence="1" type="primary">nadE</name>
    <name type="ordered locus">SG1866</name>
</gene>
<dbReference type="EC" id="6.3.1.5" evidence="1"/>
<dbReference type="EMBL" id="AP008232">
    <property type="protein sequence ID" value="BAE75141.1"/>
    <property type="molecule type" value="Genomic_DNA"/>
</dbReference>
<dbReference type="RefSeq" id="WP_011411810.1">
    <property type="nucleotide sequence ID" value="NC_007712.1"/>
</dbReference>
<dbReference type="SMR" id="Q2NRT4"/>
<dbReference type="STRING" id="343509.SG1866"/>
<dbReference type="KEGG" id="sgl:SG1866"/>
<dbReference type="eggNOG" id="COG0171">
    <property type="taxonomic scope" value="Bacteria"/>
</dbReference>
<dbReference type="HOGENOM" id="CLU_059327_3_0_6"/>
<dbReference type="OrthoDB" id="3266517at2"/>
<dbReference type="UniPathway" id="UPA00253">
    <property type="reaction ID" value="UER00333"/>
</dbReference>
<dbReference type="Proteomes" id="UP000001932">
    <property type="component" value="Chromosome"/>
</dbReference>
<dbReference type="GO" id="GO:0005737">
    <property type="term" value="C:cytoplasm"/>
    <property type="evidence" value="ECO:0007669"/>
    <property type="project" value="InterPro"/>
</dbReference>
<dbReference type="GO" id="GO:0005524">
    <property type="term" value="F:ATP binding"/>
    <property type="evidence" value="ECO:0007669"/>
    <property type="project" value="UniProtKB-UniRule"/>
</dbReference>
<dbReference type="GO" id="GO:0004359">
    <property type="term" value="F:glutaminase activity"/>
    <property type="evidence" value="ECO:0007669"/>
    <property type="project" value="InterPro"/>
</dbReference>
<dbReference type="GO" id="GO:0046872">
    <property type="term" value="F:metal ion binding"/>
    <property type="evidence" value="ECO:0007669"/>
    <property type="project" value="UniProtKB-KW"/>
</dbReference>
<dbReference type="GO" id="GO:0003952">
    <property type="term" value="F:NAD+ synthase (glutamine-hydrolyzing) activity"/>
    <property type="evidence" value="ECO:0007669"/>
    <property type="project" value="InterPro"/>
</dbReference>
<dbReference type="GO" id="GO:0008795">
    <property type="term" value="F:NAD+ synthase activity"/>
    <property type="evidence" value="ECO:0007669"/>
    <property type="project" value="UniProtKB-UniRule"/>
</dbReference>
<dbReference type="GO" id="GO:0009435">
    <property type="term" value="P:NAD biosynthetic process"/>
    <property type="evidence" value="ECO:0007669"/>
    <property type="project" value="UniProtKB-UniRule"/>
</dbReference>
<dbReference type="CDD" id="cd00553">
    <property type="entry name" value="NAD_synthase"/>
    <property type="match status" value="1"/>
</dbReference>
<dbReference type="FunFam" id="3.40.50.620:FF:000015">
    <property type="entry name" value="NH(3)-dependent NAD(+) synthetase"/>
    <property type="match status" value="1"/>
</dbReference>
<dbReference type="Gene3D" id="3.40.50.620">
    <property type="entry name" value="HUPs"/>
    <property type="match status" value="1"/>
</dbReference>
<dbReference type="HAMAP" id="MF_00193">
    <property type="entry name" value="NadE_ammonia_dep"/>
    <property type="match status" value="1"/>
</dbReference>
<dbReference type="InterPro" id="IPR022310">
    <property type="entry name" value="NAD/GMP_synthase"/>
</dbReference>
<dbReference type="InterPro" id="IPR003694">
    <property type="entry name" value="NAD_synthase"/>
</dbReference>
<dbReference type="InterPro" id="IPR022926">
    <property type="entry name" value="NH(3)-dep_NAD(+)_synth"/>
</dbReference>
<dbReference type="InterPro" id="IPR014729">
    <property type="entry name" value="Rossmann-like_a/b/a_fold"/>
</dbReference>
<dbReference type="NCBIfam" id="TIGR00552">
    <property type="entry name" value="nadE"/>
    <property type="match status" value="1"/>
</dbReference>
<dbReference type="NCBIfam" id="NF001979">
    <property type="entry name" value="PRK00768.1"/>
    <property type="match status" value="1"/>
</dbReference>
<dbReference type="PANTHER" id="PTHR23090">
    <property type="entry name" value="NH 3 /GLUTAMINE-DEPENDENT NAD + SYNTHETASE"/>
    <property type="match status" value="1"/>
</dbReference>
<dbReference type="PANTHER" id="PTHR23090:SF7">
    <property type="entry name" value="NH(3)-DEPENDENT NAD(+) SYNTHETASE"/>
    <property type="match status" value="1"/>
</dbReference>
<dbReference type="Pfam" id="PF02540">
    <property type="entry name" value="NAD_synthase"/>
    <property type="match status" value="1"/>
</dbReference>
<dbReference type="SUPFAM" id="SSF52402">
    <property type="entry name" value="Adenine nucleotide alpha hydrolases-like"/>
    <property type="match status" value="1"/>
</dbReference>
<comment type="function">
    <text evidence="1">Catalyzes the ATP-dependent amidation of deamido-NAD to form NAD. Uses ammonia as a nitrogen source.</text>
</comment>
<comment type="catalytic activity">
    <reaction evidence="1">
        <text>deamido-NAD(+) + NH4(+) + ATP = AMP + diphosphate + NAD(+) + H(+)</text>
        <dbReference type="Rhea" id="RHEA:21188"/>
        <dbReference type="ChEBI" id="CHEBI:15378"/>
        <dbReference type="ChEBI" id="CHEBI:28938"/>
        <dbReference type="ChEBI" id="CHEBI:30616"/>
        <dbReference type="ChEBI" id="CHEBI:33019"/>
        <dbReference type="ChEBI" id="CHEBI:57540"/>
        <dbReference type="ChEBI" id="CHEBI:58437"/>
        <dbReference type="ChEBI" id="CHEBI:456215"/>
        <dbReference type="EC" id="6.3.1.5"/>
    </reaction>
</comment>
<comment type="pathway">
    <text evidence="1">Cofactor biosynthesis; NAD(+) biosynthesis; NAD(+) from deamido-NAD(+) (ammonia route): step 1/1.</text>
</comment>
<comment type="subunit">
    <text evidence="1">Homodimer.</text>
</comment>
<comment type="similarity">
    <text evidence="1">Belongs to the NAD synthetase family.</text>
</comment>
<sequence length="274" mass="30207">MAIQQEIIAALGVKPTIDPAAEFRVSVEFLKAYLKKHIFVRTLVLGISGGQDSTLTGKICQQAISELRQETGIADYQFIAVRLPHGEQKDEADCKDAIAFIEPDRVITINIKSAIQASEATLSEAGIVLSDYVKGNEKARERMKAQYSIAGMTAGLVVGTDHAAEAVTGFFTKYGDGGTDINPLFRLNKRQGRALLQHLGCPEHLYLKAPTADLEEESPALPDETALGVTYEMLDDYLEGKTIDAAAARVIENWYLRTEHKRHPPVTVFDDFWK</sequence>